<proteinExistence type="inferred from homology"/>
<feature type="chain" id="PRO_0000389383" description="Small ribosomal subunit protein eS1">
    <location>
        <begin position="1"/>
        <end position="242"/>
    </location>
</feature>
<organism>
    <name type="scientific">Lodderomyces elongisporus (strain ATCC 11503 / CBS 2605 / JCM 1781 / NBRC 1676 / NRRL YB-4239)</name>
    <name type="common">Yeast</name>
    <name type="synonym">Saccharomyces elongisporus</name>
    <dbReference type="NCBI Taxonomy" id="379508"/>
    <lineage>
        <taxon>Eukaryota</taxon>
        <taxon>Fungi</taxon>
        <taxon>Dikarya</taxon>
        <taxon>Ascomycota</taxon>
        <taxon>Saccharomycotina</taxon>
        <taxon>Pichiomycetes</taxon>
        <taxon>Debaryomycetaceae</taxon>
        <taxon>Candida/Lodderomyces clade</taxon>
        <taxon>Lodderomyces</taxon>
    </lineage>
</organism>
<accession>A5DVF8</accession>
<reference key="1">
    <citation type="journal article" date="2009" name="Nature">
        <title>Evolution of pathogenicity and sexual reproduction in eight Candida genomes.</title>
        <authorList>
            <person name="Butler G."/>
            <person name="Rasmussen M.D."/>
            <person name="Lin M.F."/>
            <person name="Santos M.A.S."/>
            <person name="Sakthikumar S."/>
            <person name="Munro C.A."/>
            <person name="Rheinbay E."/>
            <person name="Grabherr M."/>
            <person name="Forche A."/>
            <person name="Reedy J.L."/>
            <person name="Agrafioti I."/>
            <person name="Arnaud M.B."/>
            <person name="Bates S."/>
            <person name="Brown A.J.P."/>
            <person name="Brunke S."/>
            <person name="Costanzo M.C."/>
            <person name="Fitzpatrick D.A."/>
            <person name="de Groot P.W.J."/>
            <person name="Harris D."/>
            <person name="Hoyer L.L."/>
            <person name="Hube B."/>
            <person name="Klis F.M."/>
            <person name="Kodira C."/>
            <person name="Lennard N."/>
            <person name="Logue M.E."/>
            <person name="Martin R."/>
            <person name="Neiman A.M."/>
            <person name="Nikolaou E."/>
            <person name="Quail M.A."/>
            <person name="Quinn J."/>
            <person name="Santos M.C."/>
            <person name="Schmitzberger F.F."/>
            <person name="Sherlock G."/>
            <person name="Shah P."/>
            <person name="Silverstein K.A.T."/>
            <person name="Skrzypek M.S."/>
            <person name="Soll D."/>
            <person name="Staggs R."/>
            <person name="Stansfield I."/>
            <person name="Stumpf M.P.H."/>
            <person name="Sudbery P.E."/>
            <person name="Srikantha T."/>
            <person name="Zeng Q."/>
            <person name="Berman J."/>
            <person name="Berriman M."/>
            <person name="Heitman J."/>
            <person name="Gow N.A.R."/>
            <person name="Lorenz M.C."/>
            <person name="Birren B.W."/>
            <person name="Kellis M."/>
            <person name="Cuomo C.A."/>
        </authorList>
    </citation>
    <scope>NUCLEOTIDE SEQUENCE [LARGE SCALE GENOMIC DNA]</scope>
    <source>
        <strain>ATCC 11503 / BCRC 21390 / CBS 2605 / JCM 1781 / NBRC 1676 / NRRL YB-4239</strain>
    </source>
</reference>
<name>RS3A_LODEL</name>
<protein>
    <recommendedName>
        <fullName evidence="1">Small ribosomal subunit protein eS1</fullName>
    </recommendedName>
    <alternativeName>
        <fullName evidence="2">40S ribosomal protein S1</fullName>
    </alternativeName>
</protein>
<evidence type="ECO:0000255" key="1">
    <source>
        <dbReference type="HAMAP-Rule" id="MF_03122"/>
    </source>
</evidence>
<evidence type="ECO:0000305" key="2"/>
<keyword id="KW-0963">Cytoplasm</keyword>
<keyword id="KW-1185">Reference proteome</keyword>
<keyword id="KW-0687">Ribonucleoprotein</keyword>
<keyword id="KW-0689">Ribosomal protein</keyword>
<sequence length="242" mass="27303">MTNKGKKKVNPFDRKQFYDIQAPSTFTNTYVGKTLVNKSAGTFSSTDALKGRVFEVNLGDLTLEDNAYRKVKLRADEVQGNKILTNFHGMDFTSDKLRSLVRKWQSLVEANVTVKTADDYVLRVFAIAFTKRQANQVKKTTYAQSSKLREVRKKMVEILTREVSNSTLSQLTSKLIPEVISREIEKSTQTIFPLQNVHIRKVKLLKQPKFDLGSLLALHGEASEEKGKKVAGGFKDVVLESV</sequence>
<comment type="subunit">
    <text evidence="1">Component of the small ribosomal subunit. Mature ribosomes consist of a small (40S) and a large (60S) subunit. The 40S subunit contains about 33 different proteins and 1 molecule of RNA (18S). The 60S subunit contains about 49 different proteins and 3 molecules of RNA (25S, 5.8S and 5S).</text>
</comment>
<comment type="subcellular location">
    <subcellularLocation>
        <location evidence="1">Cytoplasm</location>
    </subcellularLocation>
</comment>
<comment type="similarity">
    <text evidence="1">Belongs to the eukaryotic ribosomal protein eS1 family.</text>
</comment>
<gene>
    <name evidence="1" type="primary">RPS1</name>
    <name type="ORF">LELG_01344</name>
</gene>
<dbReference type="EMBL" id="CH981525">
    <property type="protein sequence ID" value="EDK43166.1"/>
    <property type="molecule type" value="Genomic_DNA"/>
</dbReference>
<dbReference type="RefSeq" id="XP_001526516.1">
    <property type="nucleotide sequence ID" value="XM_001526466.1"/>
</dbReference>
<dbReference type="SMR" id="A5DVF8"/>
<dbReference type="FunCoup" id="A5DVF8">
    <property type="interactions" value="1315"/>
</dbReference>
<dbReference type="STRING" id="379508.A5DVF8"/>
<dbReference type="GeneID" id="5234660"/>
<dbReference type="KEGG" id="lel:PVL30_001315"/>
<dbReference type="VEuPathDB" id="FungiDB:LELG_01344"/>
<dbReference type="eggNOG" id="KOG1628">
    <property type="taxonomic scope" value="Eukaryota"/>
</dbReference>
<dbReference type="HOGENOM" id="CLU_062507_0_0_1"/>
<dbReference type="InParanoid" id="A5DVF8"/>
<dbReference type="OMA" id="TRFKGHE"/>
<dbReference type="OrthoDB" id="9834376at2759"/>
<dbReference type="Proteomes" id="UP000001996">
    <property type="component" value="Unassembled WGS sequence"/>
</dbReference>
<dbReference type="GO" id="GO:0022627">
    <property type="term" value="C:cytosolic small ribosomal subunit"/>
    <property type="evidence" value="ECO:0007669"/>
    <property type="project" value="UniProtKB-UniRule"/>
</dbReference>
<dbReference type="GO" id="GO:0003735">
    <property type="term" value="F:structural constituent of ribosome"/>
    <property type="evidence" value="ECO:0007669"/>
    <property type="project" value="UniProtKB-UniRule"/>
</dbReference>
<dbReference type="GO" id="GO:0006412">
    <property type="term" value="P:translation"/>
    <property type="evidence" value="ECO:0007669"/>
    <property type="project" value="UniProtKB-UniRule"/>
</dbReference>
<dbReference type="HAMAP" id="MF_03122">
    <property type="entry name" value="Ribosomal_eS1_euk"/>
    <property type="match status" value="1"/>
</dbReference>
<dbReference type="InterPro" id="IPR001593">
    <property type="entry name" value="Ribosomal_eS1"/>
</dbReference>
<dbReference type="InterPro" id="IPR027500">
    <property type="entry name" value="Ribosomal_eS1_euk"/>
</dbReference>
<dbReference type="PANTHER" id="PTHR11830">
    <property type="entry name" value="40S RIBOSOMAL PROTEIN S3A"/>
    <property type="match status" value="1"/>
</dbReference>
<dbReference type="Pfam" id="PF01015">
    <property type="entry name" value="Ribosomal_S3Ae"/>
    <property type="match status" value="1"/>
</dbReference>
<dbReference type="SMART" id="SM01397">
    <property type="entry name" value="Ribosomal_S3Ae"/>
    <property type="match status" value="1"/>
</dbReference>